<dbReference type="EC" id="4.3.2.10" evidence="1"/>
<dbReference type="EMBL" id="CU207211">
    <property type="protein sequence ID" value="CAL63173.1"/>
    <property type="molecule type" value="Genomic_DNA"/>
</dbReference>
<dbReference type="SMR" id="A4G9I6"/>
<dbReference type="STRING" id="204773.HEAR3064"/>
<dbReference type="KEGG" id="har:HEAR3064"/>
<dbReference type="eggNOG" id="COG0107">
    <property type="taxonomic scope" value="Bacteria"/>
</dbReference>
<dbReference type="HOGENOM" id="CLU_048577_4_0_4"/>
<dbReference type="OrthoDB" id="9781903at2"/>
<dbReference type="UniPathway" id="UPA00031">
    <property type="reaction ID" value="UER00010"/>
</dbReference>
<dbReference type="Proteomes" id="UP000006697">
    <property type="component" value="Chromosome"/>
</dbReference>
<dbReference type="GO" id="GO:0005737">
    <property type="term" value="C:cytoplasm"/>
    <property type="evidence" value="ECO:0007669"/>
    <property type="project" value="UniProtKB-SubCell"/>
</dbReference>
<dbReference type="GO" id="GO:0000107">
    <property type="term" value="F:imidazoleglycerol-phosphate synthase activity"/>
    <property type="evidence" value="ECO:0007669"/>
    <property type="project" value="UniProtKB-UniRule"/>
</dbReference>
<dbReference type="GO" id="GO:0016829">
    <property type="term" value="F:lyase activity"/>
    <property type="evidence" value="ECO:0007669"/>
    <property type="project" value="UniProtKB-KW"/>
</dbReference>
<dbReference type="GO" id="GO:0000105">
    <property type="term" value="P:L-histidine biosynthetic process"/>
    <property type="evidence" value="ECO:0007669"/>
    <property type="project" value="UniProtKB-UniRule"/>
</dbReference>
<dbReference type="CDD" id="cd04731">
    <property type="entry name" value="HisF"/>
    <property type="match status" value="1"/>
</dbReference>
<dbReference type="FunFam" id="3.20.20.70:FF:000006">
    <property type="entry name" value="Imidazole glycerol phosphate synthase subunit HisF"/>
    <property type="match status" value="1"/>
</dbReference>
<dbReference type="Gene3D" id="3.20.20.70">
    <property type="entry name" value="Aldolase class I"/>
    <property type="match status" value="1"/>
</dbReference>
<dbReference type="HAMAP" id="MF_01013">
    <property type="entry name" value="HisF"/>
    <property type="match status" value="1"/>
</dbReference>
<dbReference type="InterPro" id="IPR013785">
    <property type="entry name" value="Aldolase_TIM"/>
</dbReference>
<dbReference type="InterPro" id="IPR006062">
    <property type="entry name" value="His_biosynth"/>
</dbReference>
<dbReference type="InterPro" id="IPR004651">
    <property type="entry name" value="HisF"/>
</dbReference>
<dbReference type="InterPro" id="IPR050064">
    <property type="entry name" value="IGPS_HisA/HisF"/>
</dbReference>
<dbReference type="InterPro" id="IPR011060">
    <property type="entry name" value="RibuloseP-bd_barrel"/>
</dbReference>
<dbReference type="NCBIfam" id="TIGR00735">
    <property type="entry name" value="hisF"/>
    <property type="match status" value="1"/>
</dbReference>
<dbReference type="PANTHER" id="PTHR21235:SF2">
    <property type="entry name" value="IMIDAZOLE GLYCEROL PHOSPHATE SYNTHASE HISHF"/>
    <property type="match status" value="1"/>
</dbReference>
<dbReference type="PANTHER" id="PTHR21235">
    <property type="entry name" value="IMIDAZOLE GLYCEROL PHOSPHATE SYNTHASE SUBUNIT HISF/H IGP SYNTHASE SUBUNIT HISF/H"/>
    <property type="match status" value="1"/>
</dbReference>
<dbReference type="Pfam" id="PF00977">
    <property type="entry name" value="His_biosynth"/>
    <property type="match status" value="1"/>
</dbReference>
<dbReference type="SUPFAM" id="SSF51366">
    <property type="entry name" value="Ribulose-phoshate binding barrel"/>
    <property type="match status" value="1"/>
</dbReference>
<accession>A4G9I6</accession>
<sequence>MTLAKRIIPCLDVTAGRVVKGVNFLELRDAGDPVEIARRYDDQGADELTFLDITATSDGRDLILDIIEAVASQVFIPLTVGGGVRAVDDVRRLLNAGADKVGINSSAISNPQLVFDASQKYGSQCIVVAIDAKKAADGRWEVFTHGGRKATGLDAIEWAKKMESLGAGEILLTSMDRDGTKVGFDLDLTRSVSDAISIPVIASGGVGGLQDLVDGVKIGRADAVLAASIFHYGQHTVQEAKRFMSEQGIAMRLT</sequence>
<keyword id="KW-0028">Amino-acid biosynthesis</keyword>
<keyword id="KW-0963">Cytoplasm</keyword>
<keyword id="KW-0368">Histidine biosynthesis</keyword>
<keyword id="KW-0456">Lyase</keyword>
<keyword id="KW-1185">Reference proteome</keyword>
<gene>
    <name evidence="1" type="primary">hisF</name>
    <name type="ordered locus">HEAR3064</name>
</gene>
<name>HIS6_HERAR</name>
<evidence type="ECO:0000255" key="1">
    <source>
        <dbReference type="HAMAP-Rule" id="MF_01013"/>
    </source>
</evidence>
<comment type="function">
    <text evidence="1">IGPS catalyzes the conversion of PRFAR and glutamine to IGP, AICAR and glutamate. The HisF subunit catalyzes the cyclization activity that produces IGP and AICAR from PRFAR using the ammonia provided by the HisH subunit.</text>
</comment>
<comment type="catalytic activity">
    <reaction evidence="1">
        <text>5-[(5-phospho-1-deoxy-D-ribulos-1-ylimino)methylamino]-1-(5-phospho-beta-D-ribosyl)imidazole-4-carboxamide + L-glutamine = D-erythro-1-(imidazol-4-yl)glycerol 3-phosphate + 5-amino-1-(5-phospho-beta-D-ribosyl)imidazole-4-carboxamide + L-glutamate + H(+)</text>
        <dbReference type="Rhea" id="RHEA:24793"/>
        <dbReference type="ChEBI" id="CHEBI:15378"/>
        <dbReference type="ChEBI" id="CHEBI:29985"/>
        <dbReference type="ChEBI" id="CHEBI:58278"/>
        <dbReference type="ChEBI" id="CHEBI:58359"/>
        <dbReference type="ChEBI" id="CHEBI:58475"/>
        <dbReference type="ChEBI" id="CHEBI:58525"/>
        <dbReference type="EC" id="4.3.2.10"/>
    </reaction>
</comment>
<comment type="pathway">
    <text evidence="1">Amino-acid biosynthesis; L-histidine biosynthesis; L-histidine from 5-phospho-alpha-D-ribose 1-diphosphate: step 5/9.</text>
</comment>
<comment type="subunit">
    <text evidence="1">Heterodimer of HisH and HisF.</text>
</comment>
<comment type="subcellular location">
    <subcellularLocation>
        <location evidence="1">Cytoplasm</location>
    </subcellularLocation>
</comment>
<comment type="similarity">
    <text evidence="1">Belongs to the HisA/HisF family.</text>
</comment>
<reference key="1">
    <citation type="journal article" date="2007" name="PLoS Genet.">
        <title>A tale of two oxidation states: bacterial colonization of arsenic-rich environments.</title>
        <authorList>
            <person name="Muller D."/>
            <person name="Medigue C."/>
            <person name="Koechler S."/>
            <person name="Barbe V."/>
            <person name="Barakat M."/>
            <person name="Talla E."/>
            <person name="Bonnefoy V."/>
            <person name="Krin E."/>
            <person name="Arsene-Ploetze F."/>
            <person name="Carapito C."/>
            <person name="Chandler M."/>
            <person name="Cournoyer B."/>
            <person name="Cruveiller S."/>
            <person name="Dossat C."/>
            <person name="Duval S."/>
            <person name="Heymann M."/>
            <person name="Leize E."/>
            <person name="Lieutaud A."/>
            <person name="Lievremont D."/>
            <person name="Makita Y."/>
            <person name="Mangenot S."/>
            <person name="Nitschke W."/>
            <person name="Ortet P."/>
            <person name="Perdrial N."/>
            <person name="Schoepp B."/>
            <person name="Siguier P."/>
            <person name="Simeonova D.D."/>
            <person name="Rouy Z."/>
            <person name="Segurens B."/>
            <person name="Turlin E."/>
            <person name="Vallenet D."/>
            <person name="van Dorsselaer A."/>
            <person name="Weiss S."/>
            <person name="Weissenbach J."/>
            <person name="Lett M.-C."/>
            <person name="Danchin A."/>
            <person name="Bertin P.N."/>
        </authorList>
    </citation>
    <scope>NUCLEOTIDE SEQUENCE [LARGE SCALE GENOMIC DNA]</scope>
    <source>
        <strain>ULPAs1</strain>
    </source>
</reference>
<organism>
    <name type="scientific">Herminiimonas arsenicoxydans</name>
    <dbReference type="NCBI Taxonomy" id="204773"/>
    <lineage>
        <taxon>Bacteria</taxon>
        <taxon>Pseudomonadati</taxon>
        <taxon>Pseudomonadota</taxon>
        <taxon>Betaproteobacteria</taxon>
        <taxon>Burkholderiales</taxon>
        <taxon>Oxalobacteraceae</taxon>
        <taxon>Herminiimonas</taxon>
    </lineage>
</organism>
<protein>
    <recommendedName>
        <fullName evidence="1">Imidazole glycerol phosphate synthase subunit HisF</fullName>
        <ecNumber evidence="1">4.3.2.10</ecNumber>
    </recommendedName>
    <alternativeName>
        <fullName evidence="1">IGP synthase cyclase subunit</fullName>
    </alternativeName>
    <alternativeName>
        <fullName evidence="1">IGP synthase subunit HisF</fullName>
    </alternativeName>
    <alternativeName>
        <fullName evidence="1">ImGP synthase subunit HisF</fullName>
        <shortName evidence="1">IGPS subunit HisF</shortName>
    </alternativeName>
</protein>
<feature type="chain" id="PRO_0000319457" description="Imidazole glycerol phosphate synthase subunit HisF">
    <location>
        <begin position="1"/>
        <end position="254"/>
    </location>
</feature>
<feature type="active site" evidence="1">
    <location>
        <position position="12"/>
    </location>
</feature>
<feature type="active site" evidence="1">
    <location>
        <position position="131"/>
    </location>
</feature>
<proteinExistence type="inferred from homology"/>